<protein>
    <recommendedName>
        <fullName>Ras-related protein Rab-7a</fullName>
        <ecNumber evidence="3">3.6.5.2</ecNumber>
    </recommendedName>
</protein>
<proteinExistence type="evidence at transcript level"/>
<keyword id="KW-0007">Acetylation</keyword>
<keyword id="KW-0072">Autophagy</keyword>
<keyword id="KW-0968">Cytoplasmic vesicle</keyword>
<keyword id="KW-0967">Endosome</keyword>
<keyword id="KW-0342">GTP-binding</keyword>
<keyword id="KW-0378">Hydrolase</keyword>
<keyword id="KW-1017">Isopeptide bond</keyword>
<keyword id="KW-0442">Lipid degradation</keyword>
<keyword id="KW-0551">Lipid droplet</keyword>
<keyword id="KW-0443">Lipid metabolism</keyword>
<keyword id="KW-0449">Lipoprotein</keyword>
<keyword id="KW-0458">Lysosome</keyword>
<keyword id="KW-0460">Magnesium</keyword>
<keyword id="KW-0472">Membrane</keyword>
<keyword id="KW-0479">Metal-binding</keyword>
<keyword id="KW-0488">Methylation</keyword>
<keyword id="KW-0496">Mitochondrion</keyword>
<keyword id="KW-0547">Nucleotide-binding</keyword>
<keyword id="KW-0597">Phosphoprotein</keyword>
<keyword id="KW-0636">Prenylation</keyword>
<keyword id="KW-0653">Protein transport</keyword>
<keyword id="KW-1185">Reference proteome</keyword>
<keyword id="KW-0813">Transport</keyword>
<keyword id="KW-0832">Ubl conjugation</keyword>
<organism>
    <name type="scientific">Oryctolagus cuniculus</name>
    <name type="common">Rabbit</name>
    <dbReference type="NCBI Taxonomy" id="9986"/>
    <lineage>
        <taxon>Eukaryota</taxon>
        <taxon>Metazoa</taxon>
        <taxon>Chordata</taxon>
        <taxon>Craniata</taxon>
        <taxon>Vertebrata</taxon>
        <taxon>Euteleostomi</taxon>
        <taxon>Mammalia</taxon>
        <taxon>Eutheria</taxon>
        <taxon>Euarchontoglires</taxon>
        <taxon>Glires</taxon>
        <taxon>Lagomorpha</taxon>
        <taxon>Leporidae</taxon>
        <taxon>Oryctolagus</taxon>
    </lineage>
</organism>
<name>RAB7A_RABIT</name>
<comment type="function">
    <text evidence="3 4">The small GTPases Rab are key regulators of intracellular membrane trafficking, from the formation of transport vesicles to their fusion with membranes. Rabs cycle between an inactive GDP-bound form and an active GTP-bound form that is able to recruit to membranes different sets of downstream effectors directly responsible for vesicle formation, movement, tethering and fusion. In its active state, RAB7A binds to a variety of effector proteins playing a key role in the regulation of endo-lysosomal trafficking. Governs early-to-late endosomal maturation, microtubule minus-end as well as plus-end directed endosomal migration and positioning, and endosome-lysosome transport through different protein-protein interaction cascades (By similarity). Also plays a central role in growth-factor-mediated cell signaling, nutrient-transporter-mediated nutrient uptake, neurotrophin transport in the axons of neurons and lipid metabolism (By similarity). Also involved in regulation of some specialized endosomal membrane trafficking, such as maturation of melanosomes, pathogen-induced phagosomes (or vacuoles) and autophagosomes (By similarity). Plays a role in the maturation and acidification of phagosomes that engulf pathogens, such as S.aureus and Mycobacteria (By similarity). Plays a role in the fusion of phagosomes with lysosomes (By similarity). In concert with RAC1, plays a role in regulating the formation of RBs (ruffled borders) in osteoclasts (By similarity). Controls the endosomal trafficking and neurite outgrowth signaling of NTRK1/TRKA (By similarity). Regulates the endocytic trafficking of the EGF-EGFR complex by regulating its lysosomal degradation (By similarity). Involved in the ADRB2-stimulated lipolysis through lipophagy, a cytosolic lipase-independent autophagic pathway. Required for the exosomal release of SDCBP, CD63 and syndecan (By similarity). Required for vesicular trafficking and cell surface expression of ACE2 (By similarity). May play a role in PRPH neuronal intermediate filament assembly (By similarity).</text>
</comment>
<comment type="catalytic activity">
    <reaction evidence="3">
        <text>GTP + H2O = GDP + phosphate + H(+)</text>
        <dbReference type="Rhea" id="RHEA:19669"/>
        <dbReference type="ChEBI" id="CHEBI:15377"/>
        <dbReference type="ChEBI" id="CHEBI:15378"/>
        <dbReference type="ChEBI" id="CHEBI:37565"/>
        <dbReference type="ChEBI" id="CHEBI:43474"/>
        <dbReference type="ChEBI" id="CHEBI:58189"/>
        <dbReference type="EC" id="3.6.5.2"/>
    </reaction>
    <physiologicalReaction direction="left-to-right" evidence="3">
        <dbReference type="Rhea" id="RHEA:19670"/>
    </physiologicalReaction>
</comment>
<comment type="cofactor">
    <cofactor evidence="3">
        <name>Mg(2+)</name>
        <dbReference type="ChEBI" id="CHEBI:18420"/>
    </cofactor>
</comment>
<comment type="activity regulation">
    <text evidence="3">Regulated by guanine nucleotide exchange factors (GEFs) which promote the exchange of bound GDP for free GTP. Regulated by GTPase activating proteins (GAPs) which increase the GTP hydrolysis activity. Inhibited by GDP dissociation inhibitors (GDIs).</text>
</comment>
<comment type="subunit">
    <text evidence="2 3 4">Interacts with NTRK1/TRKA (By similarity). Interacts with RILP (By similarity). Interacts with PSMA7 (By similarity). Interacts with RNF115 (By similarity). Interacts with FYCO1 (By similarity). Interacts with the PIK3C3/VPS34-PIK3R4 complex (By similarity). The GTP-bound form interacts with OSBPL1A (By similarity). The GTP-bound form interacts with RAC1 (By similarity). Interacts with CLN3 (By similarity). Interacts with CHM, the substrate-binding subunit of the Rab geranylgeranyltransferase complex (By similarity). Interacts with C9orf72. Does not interact with HPS4 and the BLOC-3 complex (heterodimer of HPS1 and HPS4). Interacts with CLN5 (By similarity). Interacts with PLEKHM1 (via N- and C-terminus) (By similarity). Interacts with PRPH; the interaction is direct (By similarity). Interacts with VPS13A (By similarity). The GDP-bound form interacts with RIMOC1 (By similarity). Interacts with the MON1A-CCZ1B complex and this interaction is enhanced in the presence of RIMOC1 (By similarity). Interacts with VPS39 and VPS41 (By similarity). Forms a ternary complex with LAMP2 and RUFY4; the interaction with LAMP2 is mediated by RUFY4 (via RUN and coiled coil domains) (By similarity).</text>
</comment>
<comment type="subcellular location">
    <subcellularLocation>
        <location evidence="3">Cytoplasmic vesicle</location>
        <location evidence="3">Phagosome membrane</location>
        <topology evidence="5">Peripheral membrane protein</topology>
        <orientation evidence="5">Cytoplasmic side</orientation>
    </subcellularLocation>
    <subcellularLocation>
        <location evidence="3">Late endosome membrane</location>
        <topology evidence="5">Peripheral membrane protein</topology>
        <orientation evidence="5">Cytoplasmic side</orientation>
    </subcellularLocation>
    <subcellularLocation>
        <location evidence="3">Lysosome membrane</location>
        <topology evidence="5">Peripheral membrane protein</topology>
        <orientation evidence="5">Cytoplasmic side</orientation>
    </subcellularLocation>
    <subcellularLocation>
        <location evidence="3">Melanosome membrane</location>
        <topology evidence="5">Peripheral membrane protein</topology>
        <orientation evidence="5">Cytoplasmic side</orientation>
    </subcellularLocation>
    <subcellularLocation>
        <location evidence="3">Cytoplasmic vesicle</location>
        <location evidence="3">Autophagosome membrane</location>
        <topology evidence="5">Peripheral membrane protein</topology>
        <orientation evidence="5">Cytoplasmic side</orientation>
    </subcellularLocation>
    <subcellularLocation>
        <location evidence="4">Lipid droplet</location>
    </subcellularLocation>
    <subcellularLocation>
        <location evidence="3">Endosome membrane</location>
    </subcellularLocation>
    <subcellularLocation>
        <location evidence="4">Cytoplasmic vesicle</location>
    </subcellularLocation>
    <subcellularLocation>
        <location evidence="3">Mitochondrion membrane</location>
        <topology evidence="5">Peripheral membrane protein</topology>
    </subcellularLocation>
    <text evidence="3 4">Colocalizes with OSBPL1A at the late endosome. Found in the ruffled border (a late endosomal-like compartment in the plasma membrane) of bone-resorbing osteoclasts. Recruited to phagosomes containing S.aureus or Mycobacterium. Lipid droplet localization is increased upon ADRB2 stimulation. Recruited to damaged mitochondria during mitophagy in a RIMOC1-dependent manner.</text>
</comment>
<comment type="domain">
    <text evidence="3">Switch I, switch II and the interswitch regions are characteristic of Rab GTPases and mediate the interactions with Rab downstream effectors. The switch regions undergo conformational changes upon nucleotide binding which drive interaction with specific sets of effector proteins, with most effectors only binding to GTP-bound Rab.</text>
</comment>
<comment type="PTM">
    <text evidence="3">Deubiquitination at Lys-191 and Lys-194 by USP32.</text>
</comment>
<comment type="PTM">
    <text evidence="3">Phosphorylated at Ser-72 by LRRK1; phosphorylation is dependent on protein kinase C (PKC) activation of LRRK1.</text>
</comment>
<comment type="PTM">
    <text evidence="3">Prenylated. Prenylation is required for association with cellular membranes.</text>
</comment>
<comment type="similarity">
    <text evidence="5">Belongs to the small GTPase superfamily. Rab family.</text>
</comment>
<reference key="1">
    <citation type="submission" date="1998-02" db="EMBL/GenBank/DDBJ databases">
        <authorList>
            <person name="Kim J.Y."/>
            <person name="Park Y.B."/>
        </authorList>
    </citation>
    <scope>NUCLEOTIDE SEQUENCE [MRNA]</scope>
    <source>
        <strain>New Zealand white</strain>
        <tissue>Liver</tissue>
    </source>
</reference>
<evidence type="ECO:0000250" key="1"/>
<evidence type="ECO:0000250" key="2">
    <source>
        <dbReference type="UniProtKB" id="P09527"/>
    </source>
</evidence>
<evidence type="ECO:0000250" key="3">
    <source>
        <dbReference type="UniProtKB" id="P51149"/>
    </source>
</evidence>
<evidence type="ECO:0000250" key="4">
    <source>
        <dbReference type="UniProtKB" id="P51150"/>
    </source>
</evidence>
<evidence type="ECO:0000305" key="5"/>
<dbReference type="EC" id="3.6.5.2" evidence="3"/>
<dbReference type="EMBL" id="AF050174">
    <property type="protein sequence ID" value="AAD02564.1"/>
    <property type="molecule type" value="mRNA"/>
</dbReference>
<dbReference type="RefSeq" id="NP_001075503.1">
    <property type="nucleotide sequence ID" value="NM_001082034.1"/>
</dbReference>
<dbReference type="SMR" id="O97572"/>
<dbReference type="STRING" id="9986.ENSOCUP00000001409"/>
<dbReference type="PaxDb" id="9986-ENSOCUP00000001409"/>
<dbReference type="GeneID" id="100008682"/>
<dbReference type="KEGG" id="ocu:100008682"/>
<dbReference type="CTD" id="7879"/>
<dbReference type="eggNOG" id="KOG0394">
    <property type="taxonomic scope" value="Eukaryota"/>
</dbReference>
<dbReference type="InParanoid" id="O97572"/>
<dbReference type="OrthoDB" id="1436450at2759"/>
<dbReference type="Proteomes" id="UP000001811">
    <property type="component" value="Unplaced"/>
</dbReference>
<dbReference type="GO" id="GO:0000421">
    <property type="term" value="C:autophagosome membrane"/>
    <property type="evidence" value="ECO:0007669"/>
    <property type="project" value="UniProtKB-SubCell"/>
</dbReference>
<dbReference type="GO" id="GO:0005829">
    <property type="term" value="C:cytosol"/>
    <property type="evidence" value="ECO:0000250"/>
    <property type="project" value="GO_Central"/>
</dbReference>
<dbReference type="GO" id="GO:0005770">
    <property type="term" value="C:late endosome"/>
    <property type="evidence" value="ECO:0000250"/>
    <property type="project" value="UniProtKB"/>
</dbReference>
<dbReference type="GO" id="GO:0031902">
    <property type="term" value="C:late endosome membrane"/>
    <property type="evidence" value="ECO:0000250"/>
    <property type="project" value="GO_Central"/>
</dbReference>
<dbReference type="GO" id="GO:0005811">
    <property type="term" value="C:lipid droplet"/>
    <property type="evidence" value="ECO:0000250"/>
    <property type="project" value="GO_Central"/>
</dbReference>
<dbReference type="GO" id="GO:0005765">
    <property type="term" value="C:lysosomal membrane"/>
    <property type="evidence" value="ECO:0007669"/>
    <property type="project" value="UniProtKB-SubCell"/>
</dbReference>
<dbReference type="GO" id="GO:0033162">
    <property type="term" value="C:melanosome membrane"/>
    <property type="evidence" value="ECO:0007669"/>
    <property type="project" value="UniProtKB-SubCell"/>
</dbReference>
<dbReference type="GO" id="GO:0031966">
    <property type="term" value="C:mitochondrial membrane"/>
    <property type="evidence" value="ECO:0007669"/>
    <property type="project" value="UniProtKB-SubCell"/>
</dbReference>
<dbReference type="GO" id="GO:0005739">
    <property type="term" value="C:mitochondrion"/>
    <property type="evidence" value="ECO:0000250"/>
    <property type="project" value="UniProtKB"/>
</dbReference>
<dbReference type="GO" id="GO:0045335">
    <property type="term" value="C:phagocytic vesicle"/>
    <property type="evidence" value="ECO:0000250"/>
    <property type="project" value="UniProtKB"/>
</dbReference>
<dbReference type="GO" id="GO:0030670">
    <property type="term" value="C:phagocytic vesicle membrane"/>
    <property type="evidence" value="ECO:0007669"/>
    <property type="project" value="UniProtKB-SubCell"/>
</dbReference>
<dbReference type="GO" id="GO:0003925">
    <property type="term" value="F:G protein activity"/>
    <property type="evidence" value="ECO:0007669"/>
    <property type="project" value="UniProtKB-EC"/>
</dbReference>
<dbReference type="GO" id="GO:0005525">
    <property type="term" value="F:GTP binding"/>
    <property type="evidence" value="ECO:0007669"/>
    <property type="project" value="UniProtKB-KW"/>
</dbReference>
<dbReference type="GO" id="GO:0045022">
    <property type="term" value="P:early endosome to late endosome transport"/>
    <property type="evidence" value="ECO:0000250"/>
    <property type="project" value="UniProtKB"/>
</dbReference>
<dbReference type="GO" id="GO:0008333">
    <property type="term" value="P:endosome to lysosome transport"/>
    <property type="evidence" value="ECO:0007669"/>
    <property type="project" value="TreeGrafter"/>
</dbReference>
<dbReference type="GO" id="GO:0099638">
    <property type="term" value="P:endosome to plasma membrane protein transport"/>
    <property type="evidence" value="ECO:0000250"/>
    <property type="project" value="UniProtKB"/>
</dbReference>
<dbReference type="GO" id="GO:0016042">
    <property type="term" value="P:lipid catabolic process"/>
    <property type="evidence" value="ECO:0007669"/>
    <property type="project" value="UniProtKB-KW"/>
</dbReference>
<dbReference type="GO" id="GO:0061724">
    <property type="term" value="P:lipophagy"/>
    <property type="evidence" value="ECO:0000250"/>
    <property type="project" value="GO_Central"/>
</dbReference>
<dbReference type="GO" id="GO:0090383">
    <property type="term" value="P:phagosome acidification"/>
    <property type="evidence" value="ECO:0000250"/>
    <property type="project" value="UniProtKB"/>
</dbReference>
<dbReference type="GO" id="GO:0090385">
    <property type="term" value="P:phagosome-lysosome fusion"/>
    <property type="evidence" value="ECO:0000250"/>
    <property type="project" value="UniProtKB"/>
</dbReference>
<dbReference type="CDD" id="cd01862">
    <property type="entry name" value="Rab7"/>
    <property type="match status" value="1"/>
</dbReference>
<dbReference type="FunFam" id="3.40.50.300:FF:000086">
    <property type="entry name" value="Ras-related small GTPase"/>
    <property type="match status" value="1"/>
</dbReference>
<dbReference type="Gene3D" id="3.40.50.300">
    <property type="entry name" value="P-loop containing nucleotide triphosphate hydrolases"/>
    <property type="match status" value="1"/>
</dbReference>
<dbReference type="InterPro" id="IPR027417">
    <property type="entry name" value="P-loop_NTPase"/>
</dbReference>
<dbReference type="InterPro" id="IPR005225">
    <property type="entry name" value="Small_GTP-bd"/>
</dbReference>
<dbReference type="InterPro" id="IPR001806">
    <property type="entry name" value="Small_GTPase"/>
</dbReference>
<dbReference type="NCBIfam" id="TIGR00231">
    <property type="entry name" value="small_GTP"/>
    <property type="match status" value="1"/>
</dbReference>
<dbReference type="PANTHER" id="PTHR47981">
    <property type="entry name" value="RAB FAMILY"/>
    <property type="match status" value="1"/>
</dbReference>
<dbReference type="PANTHER" id="PTHR47981:SF13">
    <property type="entry name" value="RAS-RELATED PROTEIN RAB-7A"/>
    <property type="match status" value="1"/>
</dbReference>
<dbReference type="Pfam" id="PF00071">
    <property type="entry name" value="Ras"/>
    <property type="match status" value="1"/>
</dbReference>
<dbReference type="PRINTS" id="PR00449">
    <property type="entry name" value="RASTRNSFRMNG"/>
</dbReference>
<dbReference type="SMART" id="SM00175">
    <property type="entry name" value="RAB"/>
    <property type="match status" value="1"/>
</dbReference>
<dbReference type="SMART" id="SM00176">
    <property type="entry name" value="RAN"/>
    <property type="match status" value="1"/>
</dbReference>
<dbReference type="SMART" id="SM00173">
    <property type="entry name" value="RAS"/>
    <property type="match status" value="1"/>
</dbReference>
<dbReference type="SMART" id="SM00174">
    <property type="entry name" value="RHO"/>
    <property type="match status" value="1"/>
</dbReference>
<dbReference type="SUPFAM" id="SSF52540">
    <property type="entry name" value="P-loop containing nucleoside triphosphate hydrolases"/>
    <property type="match status" value="1"/>
</dbReference>
<dbReference type="PROSITE" id="PS51419">
    <property type="entry name" value="RAB"/>
    <property type="match status" value="1"/>
</dbReference>
<accession>O97572</accession>
<feature type="initiator methionine" description="Removed" evidence="3">
    <location>
        <position position="1"/>
    </location>
</feature>
<feature type="chain" id="PRO_0000121123" description="Ras-related protein Rab-7a">
    <location>
        <begin position="2"/>
        <end position="207"/>
    </location>
</feature>
<feature type="short sequence motif" description="Switch 1" evidence="3">
    <location>
        <begin position="28"/>
        <end position="41"/>
    </location>
</feature>
<feature type="short sequence motif" description="Switch 2" evidence="3">
    <location>
        <begin position="67"/>
        <end position="82"/>
    </location>
</feature>
<feature type="binding site" evidence="3">
    <location>
        <position position="17"/>
    </location>
    <ligand>
        <name>GTP</name>
        <dbReference type="ChEBI" id="CHEBI:37565"/>
    </ligand>
</feature>
<feature type="binding site" evidence="3">
    <location>
        <position position="18"/>
    </location>
    <ligand>
        <name>GTP</name>
        <dbReference type="ChEBI" id="CHEBI:37565"/>
    </ligand>
</feature>
<feature type="binding site" evidence="3">
    <location>
        <position position="19"/>
    </location>
    <ligand>
        <name>GTP</name>
        <dbReference type="ChEBI" id="CHEBI:37565"/>
    </ligand>
</feature>
<feature type="binding site" evidence="3">
    <location>
        <position position="20"/>
    </location>
    <ligand>
        <name>GTP</name>
        <dbReference type="ChEBI" id="CHEBI:37565"/>
    </ligand>
</feature>
<feature type="binding site" evidence="3">
    <location>
        <position position="21"/>
    </location>
    <ligand>
        <name>GTP</name>
        <dbReference type="ChEBI" id="CHEBI:37565"/>
    </ligand>
</feature>
<feature type="binding site" evidence="3">
    <location>
        <position position="22"/>
    </location>
    <ligand>
        <name>GTP</name>
        <dbReference type="ChEBI" id="CHEBI:37565"/>
    </ligand>
</feature>
<feature type="binding site" evidence="3">
    <location>
        <position position="22"/>
    </location>
    <ligand>
        <name>Mg(2+)</name>
        <dbReference type="ChEBI" id="CHEBI:18420"/>
    </ligand>
</feature>
<feature type="binding site" evidence="3">
    <location>
        <position position="23"/>
    </location>
    <ligand>
        <name>GTP</name>
        <dbReference type="ChEBI" id="CHEBI:37565"/>
    </ligand>
</feature>
<feature type="binding site" evidence="3">
    <location>
        <position position="34"/>
    </location>
    <ligand>
        <name>GTP</name>
        <dbReference type="ChEBI" id="CHEBI:37565"/>
    </ligand>
</feature>
<feature type="binding site" evidence="3">
    <location>
        <position position="35"/>
    </location>
    <ligand>
        <name>GTP</name>
        <dbReference type="ChEBI" id="CHEBI:37565"/>
    </ligand>
</feature>
<feature type="binding site" evidence="3">
    <location>
        <position position="37"/>
    </location>
    <ligand>
        <name>GTP</name>
        <dbReference type="ChEBI" id="CHEBI:37565"/>
    </ligand>
</feature>
<feature type="binding site" evidence="3">
    <location>
        <position position="40"/>
    </location>
    <ligand>
        <name>GTP</name>
        <dbReference type="ChEBI" id="CHEBI:37565"/>
    </ligand>
</feature>
<feature type="binding site" evidence="3">
    <location>
        <position position="40"/>
    </location>
    <ligand>
        <name>Mg(2+)</name>
        <dbReference type="ChEBI" id="CHEBI:18420"/>
    </ligand>
</feature>
<feature type="binding site" evidence="3">
    <location>
        <position position="63"/>
    </location>
    <ligand>
        <name>Mg(2+)</name>
        <dbReference type="ChEBI" id="CHEBI:18420"/>
    </ligand>
</feature>
<feature type="binding site" evidence="3">
    <location>
        <position position="66"/>
    </location>
    <ligand>
        <name>GTP</name>
        <dbReference type="ChEBI" id="CHEBI:37565"/>
    </ligand>
</feature>
<feature type="binding site" evidence="3">
    <location>
        <position position="125"/>
    </location>
    <ligand>
        <name>GTP</name>
        <dbReference type="ChEBI" id="CHEBI:37565"/>
    </ligand>
</feature>
<feature type="binding site" evidence="3">
    <location>
        <position position="126"/>
    </location>
    <ligand>
        <name>GTP</name>
        <dbReference type="ChEBI" id="CHEBI:37565"/>
    </ligand>
</feature>
<feature type="binding site" evidence="3">
    <location>
        <position position="128"/>
    </location>
    <ligand>
        <name>GTP</name>
        <dbReference type="ChEBI" id="CHEBI:37565"/>
    </ligand>
</feature>
<feature type="binding site" evidence="3">
    <location>
        <position position="156"/>
    </location>
    <ligand>
        <name>GTP</name>
        <dbReference type="ChEBI" id="CHEBI:37565"/>
    </ligand>
</feature>
<feature type="binding site" evidence="3">
    <location>
        <position position="157"/>
    </location>
    <ligand>
        <name>GTP</name>
        <dbReference type="ChEBI" id="CHEBI:37565"/>
    </ligand>
</feature>
<feature type="modified residue" description="N-acetylthreonine" evidence="3">
    <location>
        <position position="2"/>
    </location>
</feature>
<feature type="modified residue" description="Phosphoserine" evidence="3">
    <location>
        <position position="72"/>
    </location>
</feature>
<feature type="modified residue" description="Cysteine methyl ester" evidence="1">
    <location>
        <position position="207"/>
    </location>
</feature>
<feature type="lipid moiety-binding region" description="S-geranylgeranyl cysteine" evidence="1">
    <location>
        <position position="205"/>
    </location>
</feature>
<feature type="lipid moiety-binding region" description="S-geranylgeranyl cysteine" evidence="1">
    <location>
        <position position="207"/>
    </location>
</feature>
<feature type="cross-link" description="Glycyl lysine isopeptide (Lys-Gly) (interchain with G-Cter in ubiquitin)" evidence="3">
    <location>
        <position position="191"/>
    </location>
</feature>
<feature type="cross-link" description="Glycyl lysine isopeptide (Lys-Gly) (interchain with G-Cter in ubiquitin)" evidence="3">
    <location>
        <position position="194"/>
    </location>
</feature>
<sequence>MTSRKKVLLKVIILGDSGVGKTSLMNQYVNKKFSNQYKATIGADFLTKEVMVDDRLVTMQIWDTAGQERFQSLSVAFYRGADCCVLVFDVTAPNTFKTLDSWRLEFLIQASPRDPENFPFVVLGNKIDLENRQVATKRAQAWSYSKNNIPYFETSAKEAINVEQAFQTIARNALKQETEVELYNEFPEPMKLDKNDRAKTSAESCSC</sequence>
<gene>
    <name type="primary">RAB7A</name>
    <name type="synonym">RAB7</name>
</gene>